<feature type="chain" id="PRO_0000162149" description="Probable tRNA-dihydrouridine synthase">
    <location>
        <begin position="1"/>
        <end position="326"/>
    </location>
</feature>
<feature type="active site" description="Proton donor" evidence="2">
    <location>
        <position position="105"/>
    </location>
</feature>
<feature type="binding site" evidence="1">
    <location>
        <begin position="18"/>
        <end position="20"/>
    </location>
    <ligand>
        <name>FMN</name>
        <dbReference type="ChEBI" id="CHEBI:58210"/>
    </ligand>
</feature>
<feature type="binding site" evidence="1">
    <location>
        <position position="143"/>
    </location>
    <ligand>
        <name>FMN</name>
        <dbReference type="ChEBI" id="CHEBI:58210"/>
    </ligand>
</feature>
<feature type="binding site" evidence="1">
    <location>
        <begin position="208"/>
        <end position="210"/>
    </location>
    <ligand>
        <name>FMN</name>
        <dbReference type="ChEBI" id="CHEBI:58210"/>
    </ligand>
</feature>
<feature type="binding site" evidence="1">
    <location>
        <begin position="232"/>
        <end position="233"/>
    </location>
    <ligand>
        <name>FMN</name>
        <dbReference type="ChEBI" id="CHEBI:58210"/>
    </ligand>
</feature>
<name>DUS_STAEQ</name>
<proteinExistence type="inferred from homology"/>
<organism>
    <name type="scientific">Staphylococcus epidermidis (strain ATCC 35984 / DSM 28319 / BCRC 17069 / CCUG 31568 / BM 3577 / RP62A)</name>
    <dbReference type="NCBI Taxonomy" id="176279"/>
    <lineage>
        <taxon>Bacteria</taxon>
        <taxon>Bacillati</taxon>
        <taxon>Bacillota</taxon>
        <taxon>Bacilli</taxon>
        <taxon>Bacillales</taxon>
        <taxon>Staphylococcaceae</taxon>
        <taxon>Staphylococcus</taxon>
    </lineage>
</organism>
<comment type="function">
    <text evidence="1">Catalyzes the synthesis of 5,6-dihydrouridine (D), a modified base found in the D-loop of most tRNAs, via the reduction of the C5-C6 double bond in target uridines.</text>
</comment>
<comment type="catalytic activity">
    <reaction evidence="1">
        <text>a 5,6-dihydrouridine in tRNA + NAD(+) = a uridine in tRNA + NADH + H(+)</text>
        <dbReference type="Rhea" id="RHEA:54452"/>
        <dbReference type="Rhea" id="RHEA-COMP:13339"/>
        <dbReference type="Rhea" id="RHEA-COMP:13887"/>
        <dbReference type="ChEBI" id="CHEBI:15378"/>
        <dbReference type="ChEBI" id="CHEBI:57540"/>
        <dbReference type="ChEBI" id="CHEBI:57945"/>
        <dbReference type="ChEBI" id="CHEBI:65315"/>
        <dbReference type="ChEBI" id="CHEBI:74443"/>
    </reaction>
</comment>
<comment type="catalytic activity">
    <reaction evidence="1">
        <text>a 5,6-dihydrouridine in tRNA + NADP(+) = a uridine in tRNA + NADPH + H(+)</text>
        <dbReference type="Rhea" id="RHEA:23624"/>
        <dbReference type="Rhea" id="RHEA-COMP:13339"/>
        <dbReference type="Rhea" id="RHEA-COMP:13887"/>
        <dbReference type="ChEBI" id="CHEBI:15378"/>
        <dbReference type="ChEBI" id="CHEBI:57783"/>
        <dbReference type="ChEBI" id="CHEBI:58349"/>
        <dbReference type="ChEBI" id="CHEBI:65315"/>
        <dbReference type="ChEBI" id="CHEBI:74443"/>
    </reaction>
</comment>
<comment type="cofactor">
    <cofactor evidence="1">
        <name>FMN</name>
        <dbReference type="ChEBI" id="CHEBI:58210"/>
    </cofactor>
</comment>
<comment type="similarity">
    <text evidence="3">Belongs to the Dus family.</text>
</comment>
<keyword id="KW-0285">Flavoprotein</keyword>
<keyword id="KW-0288">FMN</keyword>
<keyword id="KW-0521">NADP</keyword>
<keyword id="KW-0560">Oxidoreductase</keyword>
<keyword id="KW-1185">Reference proteome</keyword>
<keyword id="KW-0694">RNA-binding</keyword>
<keyword id="KW-0819">tRNA processing</keyword>
<keyword id="KW-0820">tRNA-binding</keyword>
<dbReference type="EC" id="1.3.1.-"/>
<dbReference type="EMBL" id="CP000029">
    <property type="protein sequence ID" value="AAW53267.1"/>
    <property type="molecule type" value="Genomic_DNA"/>
</dbReference>
<dbReference type="RefSeq" id="WP_001830546.1">
    <property type="nucleotide sequence ID" value="NC_002976.3"/>
</dbReference>
<dbReference type="SMR" id="Q5HKD5"/>
<dbReference type="STRING" id="176279.SERP2413"/>
<dbReference type="KEGG" id="ser:SERP2413"/>
<dbReference type="eggNOG" id="COG0042">
    <property type="taxonomic scope" value="Bacteria"/>
</dbReference>
<dbReference type="HOGENOM" id="CLU_013299_0_3_9"/>
<dbReference type="Proteomes" id="UP000000531">
    <property type="component" value="Chromosome"/>
</dbReference>
<dbReference type="GO" id="GO:0050660">
    <property type="term" value="F:flavin adenine dinucleotide binding"/>
    <property type="evidence" value="ECO:0007669"/>
    <property type="project" value="InterPro"/>
</dbReference>
<dbReference type="GO" id="GO:0000049">
    <property type="term" value="F:tRNA binding"/>
    <property type="evidence" value="ECO:0007669"/>
    <property type="project" value="UniProtKB-KW"/>
</dbReference>
<dbReference type="GO" id="GO:0017150">
    <property type="term" value="F:tRNA dihydrouridine synthase activity"/>
    <property type="evidence" value="ECO:0007669"/>
    <property type="project" value="InterPro"/>
</dbReference>
<dbReference type="CDD" id="cd02801">
    <property type="entry name" value="DUS_like_FMN"/>
    <property type="match status" value="1"/>
</dbReference>
<dbReference type="Gene3D" id="3.20.20.70">
    <property type="entry name" value="Aldolase class I"/>
    <property type="match status" value="1"/>
</dbReference>
<dbReference type="Gene3D" id="1.10.1200.80">
    <property type="entry name" value="Putative flavin oxidoreducatase, domain 2"/>
    <property type="match status" value="1"/>
</dbReference>
<dbReference type="InterPro" id="IPR013785">
    <property type="entry name" value="Aldolase_TIM"/>
</dbReference>
<dbReference type="InterPro" id="IPR035587">
    <property type="entry name" value="DUS-like_FMN-bd"/>
</dbReference>
<dbReference type="InterPro" id="IPR001269">
    <property type="entry name" value="DUS_fam"/>
</dbReference>
<dbReference type="InterPro" id="IPR024036">
    <property type="entry name" value="tRNA-dHydroUridine_Synthase_C"/>
</dbReference>
<dbReference type="InterPro" id="IPR018517">
    <property type="entry name" value="tRNA_hU_synthase_CS"/>
</dbReference>
<dbReference type="PANTHER" id="PTHR11082:SF25">
    <property type="entry name" value="DUS-LIKE FMN-BINDING DOMAIN-CONTAINING PROTEIN"/>
    <property type="match status" value="1"/>
</dbReference>
<dbReference type="PANTHER" id="PTHR11082">
    <property type="entry name" value="TRNA-DIHYDROURIDINE SYNTHASE"/>
    <property type="match status" value="1"/>
</dbReference>
<dbReference type="Pfam" id="PF01207">
    <property type="entry name" value="Dus"/>
    <property type="match status" value="1"/>
</dbReference>
<dbReference type="PIRSF" id="PIRSF006621">
    <property type="entry name" value="Dus"/>
    <property type="match status" value="1"/>
</dbReference>
<dbReference type="SUPFAM" id="SSF51395">
    <property type="entry name" value="FMN-linked oxidoreductases"/>
    <property type="match status" value="1"/>
</dbReference>
<dbReference type="PROSITE" id="PS01136">
    <property type="entry name" value="UPF0034"/>
    <property type="match status" value="1"/>
</dbReference>
<accession>Q5HKD5</accession>
<reference key="1">
    <citation type="journal article" date="2005" name="J. Bacteriol.">
        <title>Insights on evolution of virulence and resistance from the complete genome analysis of an early methicillin-resistant Staphylococcus aureus strain and a biofilm-producing methicillin-resistant Staphylococcus epidermidis strain.</title>
        <authorList>
            <person name="Gill S.R."/>
            <person name="Fouts D.E."/>
            <person name="Archer G.L."/>
            <person name="Mongodin E.F."/>
            <person name="DeBoy R.T."/>
            <person name="Ravel J."/>
            <person name="Paulsen I.T."/>
            <person name="Kolonay J.F."/>
            <person name="Brinkac L.M."/>
            <person name="Beanan M.J."/>
            <person name="Dodson R.J."/>
            <person name="Daugherty S.C."/>
            <person name="Madupu R."/>
            <person name="Angiuoli S.V."/>
            <person name="Durkin A.S."/>
            <person name="Haft D.H."/>
            <person name="Vamathevan J.J."/>
            <person name="Khouri H."/>
            <person name="Utterback T.R."/>
            <person name="Lee C."/>
            <person name="Dimitrov G."/>
            <person name="Jiang L."/>
            <person name="Qin H."/>
            <person name="Weidman J."/>
            <person name="Tran K."/>
            <person name="Kang K.H."/>
            <person name="Hance I.R."/>
            <person name="Nelson K.E."/>
            <person name="Fraser C.M."/>
        </authorList>
    </citation>
    <scope>NUCLEOTIDE SEQUENCE [LARGE SCALE GENOMIC DNA]</scope>
    <source>
        <strain>ATCC 35984 / DSM 28319 / BCRC 17069 / CCUG 31568 / BM 3577 / RP62A</strain>
    </source>
</reference>
<evidence type="ECO:0000250" key="1">
    <source>
        <dbReference type="UniProtKB" id="P33371"/>
    </source>
</evidence>
<evidence type="ECO:0000250" key="2">
    <source>
        <dbReference type="UniProtKB" id="Q5SMC7"/>
    </source>
</evidence>
<evidence type="ECO:0000305" key="3"/>
<protein>
    <recommendedName>
        <fullName>Probable tRNA-dihydrouridine synthase</fullName>
        <ecNumber>1.3.1.-</ecNumber>
    </recommendedName>
</protein>
<gene>
    <name type="primary">dus</name>
    <name type="ordered locus">SERP2413</name>
</gene>
<sequence>MKENFWSTLPRPFFILAPMEDVTDIVFRHVVSEAARPDVFFTEFTNTESYCHPEGIHSVRGRLTFSDDEQPMVAHIWGDKPEQFREMSIGLADMGFKGIDLNMGCPVANVAKKGKGSGLILRPETAAEIIQASKAGGLPVSVKTRLGYYDIDEWRDWLKHVFEQDIANLSIHLRTRKEMSKVDAHWELIEAIKTLRDEIAPNTLLTINGDIPDRQTGLELANKYGIDGIMIGRGIFHNPFAFEKEPREHSSKELLGLLRLHLSLFEKYDKDEARHFKSLRRFFKIYVRGIRGASELRHQLMNTQSIAEARELLDTFEARMDARSEV</sequence>